<dbReference type="EMBL" id="AB445625">
    <property type="protein sequence ID" value="BAG55022.1"/>
    <property type="molecule type" value="mRNA"/>
</dbReference>
<dbReference type="RefSeq" id="NP_001123941.1">
    <property type="nucleotide sequence ID" value="NM_001130469.1"/>
</dbReference>
<dbReference type="SMR" id="B3Y613"/>
<dbReference type="FunCoup" id="B3Y613">
    <property type="interactions" value="560"/>
</dbReference>
<dbReference type="STRING" id="9598.ENSPTRP00000028379"/>
<dbReference type="GlyCosmos" id="B3Y613">
    <property type="glycosylation" value="4 sites, No reported glycans"/>
</dbReference>
<dbReference type="PaxDb" id="9598-ENSPTRP00000028379"/>
<dbReference type="GeneID" id="471325"/>
<dbReference type="KEGG" id="ptr:471325"/>
<dbReference type="CTD" id="7097"/>
<dbReference type="eggNOG" id="KOG4641">
    <property type="taxonomic scope" value="Eukaryota"/>
</dbReference>
<dbReference type="InParanoid" id="B3Y613"/>
<dbReference type="OrthoDB" id="6087at9604"/>
<dbReference type="Proteomes" id="UP000002277">
    <property type="component" value="Unplaced"/>
</dbReference>
<dbReference type="GO" id="GO:0005794">
    <property type="term" value="C:Golgi apparatus"/>
    <property type="evidence" value="ECO:0000250"/>
    <property type="project" value="UniProtKB"/>
</dbReference>
<dbReference type="GO" id="GO:0045121">
    <property type="term" value="C:membrane raft"/>
    <property type="evidence" value="ECO:0000250"/>
    <property type="project" value="UniProtKB"/>
</dbReference>
<dbReference type="GO" id="GO:0030670">
    <property type="term" value="C:phagocytic vesicle membrane"/>
    <property type="evidence" value="ECO:0007669"/>
    <property type="project" value="UniProtKB-SubCell"/>
</dbReference>
<dbReference type="GO" id="GO:0005886">
    <property type="term" value="C:plasma membrane"/>
    <property type="evidence" value="ECO:0000318"/>
    <property type="project" value="GO_Central"/>
</dbReference>
<dbReference type="GO" id="GO:0043235">
    <property type="term" value="C:receptor complex"/>
    <property type="evidence" value="ECO:0000318"/>
    <property type="project" value="GO_Central"/>
</dbReference>
<dbReference type="GO" id="GO:0061809">
    <property type="term" value="F:NAD+ nucleosidase activity, cyclic ADP-ribose generating"/>
    <property type="evidence" value="ECO:0007669"/>
    <property type="project" value="UniProtKB-EC"/>
</dbReference>
<dbReference type="GO" id="GO:0038023">
    <property type="term" value="F:signaling receptor activity"/>
    <property type="evidence" value="ECO:0000318"/>
    <property type="project" value="GO_Central"/>
</dbReference>
<dbReference type="GO" id="GO:0004888">
    <property type="term" value="F:transmembrane signaling receptor activity"/>
    <property type="evidence" value="ECO:0007669"/>
    <property type="project" value="InterPro"/>
</dbReference>
<dbReference type="GO" id="GO:0042497">
    <property type="term" value="F:triacyl lipopeptide binding"/>
    <property type="evidence" value="ECO:0000318"/>
    <property type="project" value="GO_Central"/>
</dbReference>
<dbReference type="GO" id="GO:0071726">
    <property type="term" value="P:cellular response to diacyl bacterial lipopeptide"/>
    <property type="evidence" value="ECO:0000250"/>
    <property type="project" value="UniProtKB"/>
</dbReference>
<dbReference type="GO" id="GO:0071727">
    <property type="term" value="P:cellular response to triacyl bacterial lipopeptide"/>
    <property type="evidence" value="ECO:0000250"/>
    <property type="project" value="UniProtKB"/>
</dbReference>
<dbReference type="GO" id="GO:0006954">
    <property type="term" value="P:inflammatory response"/>
    <property type="evidence" value="ECO:0000318"/>
    <property type="project" value="GO_Central"/>
</dbReference>
<dbReference type="GO" id="GO:0045087">
    <property type="term" value="P:innate immune response"/>
    <property type="evidence" value="ECO:0007669"/>
    <property type="project" value="UniProtKB-KW"/>
</dbReference>
<dbReference type="GO" id="GO:0002224">
    <property type="term" value="P:toll-like receptor signaling pathway"/>
    <property type="evidence" value="ECO:0000318"/>
    <property type="project" value="GO_Central"/>
</dbReference>
<dbReference type="FunFam" id="3.40.50.10140:FF:000001">
    <property type="entry name" value="Toll-like receptor 2"/>
    <property type="match status" value="1"/>
</dbReference>
<dbReference type="FunFam" id="3.80.10.10:FF:000046">
    <property type="entry name" value="Toll-like receptor 2"/>
    <property type="match status" value="1"/>
</dbReference>
<dbReference type="Gene3D" id="3.80.10.10">
    <property type="entry name" value="Ribonuclease Inhibitor"/>
    <property type="match status" value="1"/>
</dbReference>
<dbReference type="Gene3D" id="3.40.50.10140">
    <property type="entry name" value="Toll/interleukin-1 receptor homology (TIR) domain"/>
    <property type="match status" value="1"/>
</dbReference>
<dbReference type="InterPro" id="IPR000483">
    <property type="entry name" value="Cys-rich_flank_reg_C"/>
</dbReference>
<dbReference type="InterPro" id="IPR001611">
    <property type="entry name" value="Leu-rich_rpt"/>
</dbReference>
<dbReference type="InterPro" id="IPR003591">
    <property type="entry name" value="Leu-rich_rpt_typical-subtyp"/>
</dbReference>
<dbReference type="InterPro" id="IPR032675">
    <property type="entry name" value="LRR_dom_sf"/>
</dbReference>
<dbReference type="InterPro" id="IPR000157">
    <property type="entry name" value="TIR_dom"/>
</dbReference>
<dbReference type="InterPro" id="IPR017241">
    <property type="entry name" value="Toll-like_receptor"/>
</dbReference>
<dbReference type="InterPro" id="IPR035897">
    <property type="entry name" value="Toll_tir_struct_dom_sf"/>
</dbReference>
<dbReference type="PANTHER" id="PTHR24365">
    <property type="entry name" value="TOLL-LIKE RECEPTOR"/>
    <property type="match status" value="1"/>
</dbReference>
<dbReference type="PANTHER" id="PTHR24365:SF17">
    <property type="entry name" value="TOLL-LIKE RECEPTOR 2"/>
    <property type="match status" value="1"/>
</dbReference>
<dbReference type="Pfam" id="PF00560">
    <property type="entry name" value="LRR_1"/>
    <property type="match status" value="1"/>
</dbReference>
<dbReference type="Pfam" id="PF13855">
    <property type="entry name" value="LRR_8"/>
    <property type="match status" value="2"/>
</dbReference>
<dbReference type="Pfam" id="PF01463">
    <property type="entry name" value="LRRCT"/>
    <property type="match status" value="1"/>
</dbReference>
<dbReference type="Pfam" id="PF01582">
    <property type="entry name" value="TIR"/>
    <property type="match status" value="1"/>
</dbReference>
<dbReference type="PIRSF" id="PIRSF037595">
    <property type="entry name" value="Toll-like_receptor"/>
    <property type="match status" value="1"/>
</dbReference>
<dbReference type="PRINTS" id="PR01537">
    <property type="entry name" value="INTRLKN1R1F"/>
</dbReference>
<dbReference type="PRINTS" id="PR00019">
    <property type="entry name" value="LEURICHRPT"/>
</dbReference>
<dbReference type="SMART" id="SM00364">
    <property type="entry name" value="LRR_BAC"/>
    <property type="match status" value="3"/>
</dbReference>
<dbReference type="SMART" id="SM00365">
    <property type="entry name" value="LRR_SD22"/>
    <property type="match status" value="5"/>
</dbReference>
<dbReference type="SMART" id="SM00369">
    <property type="entry name" value="LRR_TYP"/>
    <property type="match status" value="7"/>
</dbReference>
<dbReference type="SMART" id="SM00082">
    <property type="entry name" value="LRRCT"/>
    <property type="match status" value="1"/>
</dbReference>
<dbReference type="SMART" id="SM00255">
    <property type="entry name" value="TIR"/>
    <property type="match status" value="1"/>
</dbReference>
<dbReference type="SUPFAM" id="SSF52058">
    <property type="entry name" value="L domain-like"/>
    <property type="match status" value="2"/>
</dbReference>
<dbReference type="SUPFAM" id="SSF52047">
    <property type="entry name" value="RNI-like"/>
    <property type="match status" value="1"/>
</dbReference>
<dbReference type="SUPFAM" id="SSF52200">
    <property type="entry name" value="Toll/Interleukin receptor TIR domain"/>
    <property type="match status" value="1"/>
</dbReference>
<dbReference type="PROSITE" id="PS51450">
    <property type="entry name" value="LRR"/>
    <property type="match status" value="11"/>
</dbReference>
<dbReference type="PROSITE" id="PS50104">
    <property type="entry name" value="TIR"/>
    <property type="match status" value="1"/>
</dbReference>
<accession>B3Y613</accession>
<sequence length="784" mass="89825">MPHTLWMVWVLGVIISLSKEESSNQASLSCDRNGICKGSSGSLNSIPSGLTEAVKSLDLSNNRITYISNSDLQRCVNLQALVLTSNGINTIEEDSFSSLGSLEHLDLSYNYLSNLSSSWFKPLSSLTFLNLLGNPYKTLGETSLFSHLTKLQILRVGNMDTFTKIQRKDFAGLTFLEELEIDASDLQSYEPKSLKSIQNVSHLILHMKQHILLLEIFVDVTSSVECLELRDTDLDTFRFSELSTGETNSLIKKFTFRNVKITDESLFQVMKLLNQISGLLELEFDDCTLNGVGNFRASDNDRVIDPGKVETLTIRRLHIPRFYLFYDLSTLYSLTERVKRITVENSKVFLVPCLLSQHLKSLEYLDLSENLIVEEYLKNSACEDAWPSLQTLILRQNHLASLEKTGETLLTLKNLTNVDISKNSFHSMPETCQWPEKMKYLNLSSTRIHSVTGCIPKTLEILDVSNNNLNLFSLNLPQLKELYISRNKLMTLPDASLLPMLLVLKISRNAITTFSKEQLDSFHTLKTLEAGGNNFICSCEFLSFTQEQQALAKVLIDWPANYLCDSPSHVRGQQVQDVRLSVSECHRTALVSGMCCALFLLILLTGVLCHRFHGLWYMKMMWAWLQAKRKPRKAPSRNICYDAFVSYSERDAYWVENLMVQELENFNPPFKLCLHKRDFIPGKWIIDNIIDSIEKSHKTVFVLSENFVKSEWCKYELDFSHFRLFDENNDAAILILLEPIEKKAIPQRFCKLRKIMNTKTYLEWPMDEAQREGFWVNLRAAIKS</sequence>
<protein>
    <recommendedName>
        <fullName>Toll-like receptor 2</fullName>
    </recommendedName>
    <cdAntigenName>CD282</cdAntigenName>
</protein>
<keyword id="KW-0968">Cytoplasmic vesicle</keyword>
<keyword id="KW-1015">Disulfide bond</keyword>
<keyword id="KW-0325">Glycoprotein</keyword>
<keyword id="KW-0391">Immunity</keyword>
<keyword id="KW-0395">Inflammatory response</keyword>
<keyword id="KW-0399">Innate immunity</keyword>
<keyword id="KW-1017">Isopeptide bond</keyword>
<keyword id="KW-0433">Leucine-rich repeat</keyword>
<keyword id="KW-0472">Membrane</keyword>
<keyword id="KW-0520">NAD</keyword>
<keyword id="KW-0675">Receptor</keyword>
<keyword id="KW-1185">Reference proteome</keyword>
<keyword id="KW-0677">Repeat</keyword>
<keyword id="KW-0732">Signal</keyword>
<keyword id="KW-0812">Transmembrane</keyword>
<keyword id="KW-1133">Transmembrane helix</keyword>
<keyword id="KW-0832">Ubl conjugation</keyword>
<comment type="function">
    <text evidence="3 4">Cooperates with LY96 to mediate the innate immune response to bacterial lipoproteins and other microbial cell wall components. Cooperates with TLR1 or TLR6 to mediate the innate immune response to bacterial lipoproteins or lipopeptides. Acts via MYD88 and TRAF6, leading to NF-kappa-B activation, cytokine secretion and the inflammatory response (By similarity). May also promote apoptosis in response to lipoproteins. Forms activation clusters composed of several receptors depending on the ligand, these clusters trigger signaling from the cell surface and subsequently are targeted to the Golgi in a lipid-raft dependent pathway. Forms the cluster TLR2:TLR6:CD14:CD36 in response to diacylated lipopeptides and TLR2:TLR1:CD14 in response to triacylated lipopeptides (By similarity).</text>
</comment>
<comment type="subunit">
    <text evidence="3 4">Interacts with LY96, TLR1 and TLR6 (via extracellular domain). TLR2 seems to exist in heterodimers with either TLR1 or TLR6 before stimulation by the ligand. The heterodimers form bigger oligomers in response to their corresponding ligands as well as further heterotypic associations with other receptors such as CD14 and/or CD36. Binds MYD88 (via TIR domain). Interacts with TICAM1. Interacts with CNPY3. Interacts with ATG16L1. Interacts with PPP1R11. Interacts with TICAM2. Interacts with TIRAP (By similarity).</text>
</comment>
<comment type="subcellular location">
    <subcellularLocation>
        <location evidence="4">Membrane</location>
        <topology evidence="5">Single-pass type I membrane protein</topology>
    </subcellularLocation>
    <subcellularLocation>
        <location evidence="4">Cytoplasmic vesicle</location>
        <location evidence="4">Phagosome membrane</location>
        <topology evidence="5">Single-pass type I membrane protein</topology>
    </subcellularLocation>
    <subcellularLocation>
        <location evidence="3">Membrane raft</location>
    </subcellularLocation>
    <text evidence="3">Does not reside in lipid rafts before stimulation but accumulates increasingly in the raft upon the presence of the microbial ligand. In response to diacylated lipoproteins, TLR2:TLR6 heterodimers are recruited in lipid rafts, this recruitment determine the intracellular targeting to the Golgi apparatus. Triacylated lipoproteins induce the same mechanism for TLR2:TLR1 heterodimers.</text>
</comment>
<comment type="domain">
    <text evidence="1">Ester-bound lipid substrates are bound through a crevice formed between the LRR 11 and LRR 12.</text>
</comment>
<comment type="domain">
    <text evidence="1">The ATG16L1-binding motif mediates interaction with ATG16L1.</text>
</comment>
<comment type="PTM">
    <text evidence="4">Ubiquitinated at Lys-754 by PPP1R11, leading to its degradation. Deubiquitinated by USP2.</text>
</comment>
<comment type="PTM">
    <text evidence="3">Glycosylation of Asn-442 is critical for secretion of the N-terminal ectodomain of TLR2.</text>
</comment>
<comment type="similarity">
    <text evidence="7">Belongs to the Toll-like receptor family.</text>
</comment>
<comment type="caution">
    <text evidence="2 7">In some plant proteins and in human SARM1, the TIR domain has NAD(+) hydrolase (NADase) activity (By similarity). However, despite the presence of the catalytic Asp residue, the isolated TIR domain of human TLR4 lacks NADase activity (By similarity). Based on this, it is unlikely that Toll-like receptors have NADase activity.</text>
</comment>
<proteinExistence type="evidence at transcript level"/>
<name>TLR2_PANTR</name>
<organism>
    <name type="scientific">Pan troglodytes</name>
    <name type="common">Chimpanzee</name>
    <dbReference type="NCBI Taxonomy" id="9598"/>
    <lineage>
        <taxon>Eukaryota</taxon>
        <taxon>Metazoa</taxon>
        <taxon>Chordata</taxon>
        <taxon>Craniata</taxon>
        <taxon>Vertebrata</taxon>
        <taxon>Euteleostomi</taxon>
        <taxon>Mammalia</taxon>
        <taxon>Eutheria</taxon>
        <taxon>Euarchontoglires</taxon>
        <taxon>Primates</taxon>
        <taxon>Haplorrhini</taxon>
        <taxon>Catarrhini</taxon>
        <taxon>Hominidae</taxon>
        <taxon>Pan</taxon>
    </lineage>
</organism>
<feature type="signal peptide" evidence="5">
    <location>
        <begin position="1"/>
        <end position="20"/>
    </location>
</feature>
<feature type="chain" id="PRO_0000363777" description="Toll-like receptor 2">
    <location>
        <begin position="21"/>
        <end position="784"/>
    </location>
</feature>
<feature type="topological domain" description="Extracellular" evidence="5">
    <location>
        <begin position="21"/>
        <end position="587"/>
    </location>
</feature>
<feature type="transmembrane region" description="Helical" evidence="5">
    <location>
        <begin position="588"/>
        <end position="608"/>
    </location>
</feature>
<feature type="topological domain" description="Cytoplasmic" evidence="5">
    <location>
        <begin position="609"/>
        <end position="784"/>
    </location>
</feature>
<feature type="repeat" description="LRR 1">
    <location>
        <begin position="54"/>
        <end position="77"/>
    </location>
</feature>
<feature type="repeat" description="LRR 2">
    <location>
        <begin position="78"/>
        <end position="101"/>
    </location>
</feature>
<feature type="repeat" description="LRR 3">
    <location>
        <begin position="102"/>
        <end position="125"/>
    </location>
</feature>
<feature type="repeat" description="LRR 4">
    <location>
        <begin position="126"/>
        <end position="150"/>
    </location>
</feature>
<feature type="repeat" description="LRR 5">
    <location>
        <begin position="151"/>
        <end position="175"/>
    </location>
</feature>
<feature type="repeat" description="LRR 6">
    <location>
        <begin position="176"/>
        <end position="199"/>
    </location>
</feature>
<feature type="repeat" description="LRR 7">
    <location>
        <begin position="200"/>
        <end position="223"/>
    </location>
</feature>
<feature type="repeat" description="LRR 8">
    <location>
        <begin position="224"/>
        <end position="250"/>
    </location>
</feature>
<feature type="repeat" description="LRR 9">
    <location>
        <begin position="251"/>
        <end position="278"/>
    </location>
</feature>
<feature type="repeat" description="LRR 10">
    <location>
        <begin position="279"/>
        <end position="308"/>
    </location>
</feature>
<feature type="repeat" description="LRR 11">
    <location>
        <begin position="309"/>
        <end position="337"/>
    </location>
</feature>
<feature type="repeat" description="LRR 12">
    <location>
        <begin position="338"/>
        <end position="361"/>
    </location>
</feature>
<feature type="repeat" description="LRR 13">
    <location>
        <begin position="362"/>
        <end position="388"/>
    </location>
</feature>
<feature type="repeat" description="LRR 14">
    <location>
        <begin position="389"/>
        <end position="414"/>
    </location>
</feature>
<feature type="repeat" description="LRR 15">
    <location>
        <begin position="415"/>
        <end position="437"/>
    </location>
</feature>
<feature type="repeat" description="LRR 16">
    <location>
        <begin position="438"/>
        <end position="457"/>
    </location>
</feature>
<feature type="repeat" description="LRR 17">
    <location>
        <begin position="458"/>
        <end position="478"/>
    </location>
</feature>
<feature type="repeat" description="LRR 18">
    <location>
        <begin position="479"/>
        <end position="500"/>
    </location>
</feature>
<feature type="repeat" description="LRR 19">
    <location>
        <begin position="501"/>
        <end position="524"/>
    </location>
</feature>
<feature type="domain" description="LRRCT">
    <location>
        <begin position="525"/>
        <end position="579"/>
    </location>
</feature>
<feature type="domain" description="TIR" evidence="6">
    <location>
        <begin position="639"/>
        <end position="782"/>
    </location>
</feature>
<feature type="short sequence motif" description="ATG16L1-binding motif">
    <location>
        <begin position="761"/>
        <end position="778"/>
    </location>
</feature>
<feature type="site" description="Interaction with bacterial lipopeptide" evidence="1">
    <location>
        <position position="349"/>
    </location>
</feature>
<feature type="glycosylation site" description="N-linked (GlcNAc...) asparagine" evidence="5">
    <location>
        <position position="114"/>
    </location>
</feature>
<feature type="glycosylation site" description="N-linked (GlcNAc...) asparagine" evidence="5">
    <location>
        <position position="199"/>
    </location>
</feature>
<feature type="glycosylation site" description="N-linked (GlcNAc...) asparagine" evidence="5">
    <location>
        <position position="414"/>
    </location>
</feature>
<feature type="glycosylation site" description="N-linked (GlcNAc...) asparagine" evidence="5">
    <location>
        <position position="442"/>
    </location>
</feature>
<feature type="disulfide bond" evidence="1">
    <location>
        <begin position="30"/>
        <end position="36"/>
    </location>
</feature>
<feature type="disulfide bond" evidence="1">
    <location>
        <begin position="353"/>
        <end position="382"/>
    </location>
</feature>
<feature type="disulfide bond" evidence="1">
    <location>
        <begin position="432"/>
        <end position="454"/>
    </location>
</feature>
<feature type="cross-link" description="Glycyl lysine isopeptide (Lys-Gly) (interchain with G-Cter in ubiquitin)" evidence="3">
    <location>
        <position position="754"/>
    </location>
</feature>
<evidence type="ECO:0000250" key="1"/>
<evidence type="ECO:0000250" key="2">
    <source>
        <dbReference type="UniProtKB" id="O00206"/>
    </source>
</evidence>
<evidence type="ECO:0000250" key="3">
    <source>
        <dbReference type="UniProtKB" id="O60603"/>
    </source>
</evidence>
<evidence type="ECO:0000250" key="4">
    <source>
        <dbReference type="UniProtKB" id="Q9QUN7"/>
    </source>
</evidence>
<evidence type="ECO:0000255" key="5"/>
<evidence type="ECO:0000255" key="6">
    <source>
        <dbReference type="PROSITE-ProRule" id="PRU00204"/>
    </source>
</evidence>
<evidence type="ECO:0000305" key="7"/>
<gene>
    <name type="primary">TLR2</name>
</gene>
<reference key="1">
    <citation type="submission" date="2008-07" db="EMBL/GenBank/DDBJ databases">
        <title>Molecular evolution of the Toll-like receptor-related genes in primates.</title>
        <authorList>
            <person name="Nakajima T."/>
            <person name="Ohtani H."/>
            <person name="Satta Y."/>
            <person name="Uno Y."/>
            <person name="Akari H."/>
            <person name="Ishida T."/>
            <person name="Kimura A."/>
        </authorList>
    </citation>
    <scope>NUCLEOTIDE SEQUENCE [MRNA]</scope>
</reference>